<accession>C4ZRS3</accession>
<gene>
    <name evidence="1" type="primary">lpxA</name>
    <name type="ordered locus">BWG_0173</name>
</gene>
<organism>
    <name type="scientific">Escherichia coli (strain K12 / MC4100 / BW2952)</name>
    <dbReference type="NCBI Taxonomy" id="595496"/>
    <lineage>
        <taxon>Bacteria</taxon>
        <taxon>Pseudomonadati</taxon>
        <taxon>Pseudomonadota</taxon>
        <taxon>Gammaproteobacteria</taxon>
        <taxon>Enterobacterales</taxon>
        <taxon>Enterobacteriaceae</taxon>
        <taxon>Escherichia</taxon>
    </lineage>
</organism>
<protein>
    <recommendedName>
        <fullName evidence="1">Acyl-[acyl-carrier-protein]--UDP-N-acetylglucosamine O-acyltransferase</fullName>
        <shortName evidence="1">UDP-N-acetylglucosamine acyltransferase</shortName>
        <ecNumber evidence="1">2.3.1.129</ecNumber>
    </recommendedName>
</protein>
<sequence length="262" mass="28080">MIDKSAFVHPTAIVEEGASIGANAHIGPFCIVGPHVEIGEGTVLKSHVVVNGHTKIGRDNEIYQFASIGEVNQDLKYAGEPTRVEIGDRNRIRESVTIHRGTVQGGGLTKVGSDNLLMINAHIAHDCTVGNRCILANNATLAGHVSVDDFAIIGGMTAVHQFCIIGAHVMVGGCSGVAQDVPPYVIAQGNHATPFGVNIEGLKRRGFSREAITAIRNAYKLIYRSGKTLDEVKPEIAELAETYPEVKAFTDFFARSTRGLIR</sequence>
<reference key="1">
    <citation type="journal article" date="2009" name="J. Bacteriol.">
        <title>Genomic sequencing reveals regulatory mutations and recombinational events in the widely used MC4100 lineage of Escherichia coli K-12.</title>
        <authorList>
            <person name="Ferenci T."/>
            <person name="Zhou Z."/>
            <person name="Betteridge T."/>
            <person name="Ren Y."/>
            <person name="Liu Y."/>
            <person name="Feng L."/>
            <person name="Reeves P.R."/>
            <person name="Wang L."/>
        </authorList>
    </citation>
    <scope>NUCLEOTIDE SEQUENCE [LARGE SCALE GENOMIC DNA]</scope>
    <source>
        <strain>K12 / MC4100 / BW2952</strain>
    </source>
</reference>
<dbReference type="EC" id="2.3.1.129" evidence="1"/>
<dbReference type="EMBL" id="CP001396">
    <property type="protein sequence ID" value="ACR65747.1"/>
    <property type="molecule type" value="Genomic_DNA"/>
</dbReference>
<dbReference type="RefSeq" id="WP_000565966.1">
    <property type="nucleotide sequence ID" value="NC_012759.1"/>
</dbReference>
<dbReference type="SMR" id="C4ZRS3"/>
<dbReference type="GeneID" id="93777244"/>
<dbReference type="KEGG" id="ebw:BWG_0173"/>
<dbReference type="HOGENOM" id="CLU_061249_0_0_6"/>
<dbReference type="UniPathway" id="UPA00359">
    <property type="reaction ID" value="UER00477"/>
</dbReference>
<dbReference type="GO" id="GO:0005737">
    <property type="term" value="C:cytoplasm"/>
    <property type="evidence" value="ECO:0007669"/>
    <property type="project" value="UniProtKB-SubCell"/>
</dbReference>
<dbReference type="GO" id="GO:0016020">
    <property type="term" value="C:membrane"/>
    <property type="evidence" value="ECO:0007669"/>
    <property type="project" value="GOC"/>
</dbReference>
<dbReference type="GO" id="GO:0008780">
    <property type="term" value="F:acyl-[acyl-carrier-protein]-UDP-N-acetylglucosamine O-acyltransferase activity"/>
    <property type="evidence" value="ECO:0007669"/>
    <property type="project" value="UniProtKB-UniRule"/>
</dbReference>
<dbReference type="GO" id="GO:0009245">
    <property type="term" value="P:lipid A biosynthetic process"/>
    <property type="evidence" value="ECO:0007669"/>
    <property type="project" value="UniProtKB-UniRule"/>
</dbReference>
<dbReference type="CDD" id="cd03351">
    <property type="entry name" value="LbH_UDP-GlcNAc_AT"/>
    <property type="match status" value="1"/>
</dbReference>
<dbReference type="FunFam" id="1.20.1180.10:FF:000001">
    <property type="entry name" value="Acyl-[acyl-carrier-protein]--UDP-N-acetylglucosamine O-acyltransferase"/>
    <property type="match status" value="1"/>
</dbReference>
<dbReference type="FunFam" id="2.160.10.10:FF:000003">
    <property type="entry name" value="Acyl-[acyl-carrier-protein]--UDP-N-acetylglucosamine O-acyltransferase"/>
    <property type="match status" value="1"/>
</dbReference>
<dbReference type="Gene3D" id="2.160.10.10">
    <property type="entry name" value="Hexapeptide repeat proteins"/>
    <property type="match status" value="1"/>
</dbReference>
<dbReference type="Gene3D" id="1.20.1180.10">
    <property type="entry name" value="Udp N-acetylglucosamine O-acyltransferase, C-terminal domain"/>
    <property type="match status" value="1"/>
</dbReference>
<dbReference type="HAMAP" id="MF_00387">
    <property type="entry name" value="LpxA"/>
    <property type="match status" value="1"/>
</dbReference>
<dbReference type="InterPro" id="IPR029098">
    <property type="entry name" value="Acetyltransf_C"/>
</dbReference>
<dbReference type="InterPro" id="IPR037157">
    <property type="entry name" value="Acetyltransf_C_sf"/>
</dbReference>
<dbReference type="InterPro" id="IPR001451">
    <property type="entry name" value="Hexapep"/>
</dbReference>
<dbReference type="InterPro" id="IPR018357">
    <property type="entry name" value="Hexapep_transf_CS"/>
</dbReference>
<dbReference type="InterPro" id="IPR010137">
    <property type="entry name" value="Lipid_A_LpxA"/>
</dbReference>
<dbReference type="InterPro" id="IPR011004">
    <property type="entry name" value="Trimer_LpxA-like_sf"/>
</dbReference>
<dbReference type="NCBIfam" id="TIGR01852">
    <property type="entry name" value="lipid_A_lpxA"/>
    <property type="match status" value="1"/>
</dbReference>
<dbReference type="NCBIfam" id="NF003657">
    <property type="entry name" value="PRK05289.1"/>
    <property type="match status" value="1"/>
</dbReference>
<dbReference type="PANTHER" id="PTHR43480">
    <property type="entry name" value="ACYL-[ACYL-CARRIER-PROTEIN]--UDP-N-ACETYLGLUCOSAMINE O-ACYLTRANSFERASE"/>
    <property type="match status" value="1"/>
</dbReference>
<dbReference type="PANTHER" id="PTHR43480:SF1">
    <property type="entry name" value="ACYL-[ACYL-CARRIER-PROTEIN]--UDP-N-ACETYLGLUCOSAMINE O-ACYLTRANSFERASE, MITOCHONDRIAL-RELATED"/>
    <property type="match status" value="1"/>
</dbReference>
<dbReference type="Pfam" id="PF13720">
    <property type="entry name" value="Acetyltransf_11"/>
    <property type="match status" value="1"/>
</dbReference>
<dbReference type="Pfam" id="PF00132">
    <property type="entry name" value="Hexapep"/>
    <property type="match status" value="2"/>
</dbReference>
<dbReference type="PIRSF" id="PIRSF000456">
    <property type="entry name" value="UDP-GlcNAc_acltr"/>
    <property type="match status" value="1"/>
</dbReference>
<dbReference type="SUPFAM" id="SSF51161">
    <property type="entry name" value="Trimeric LpxA-like enzymes"/>
    <property type="match status" value="1"/>
</dbReference>
<dbReference type="PROSITE" id="PS00101">
    <property type="entry name" value="HEXAPEP_TRANSFERASES"/>
    <property type="match status" value="2"/>
</dbReference>
<name>LPXA_ECOBW</name>
<feature type="chain" id="PRO_1000205793" description="Acyl-[acyl-carrier-protein]--UDP-N-acetylglucosamine O-acyltransferase">
    <location>
        <begin position="1"/>
        <end position="262"/>
    </location>
</feature>
<keyword id="KW-0012">Acyltransferase</keyword>
<keyword id="KW-0963">Cytoplasm</keyword>
<keyword id="KW-0441">Lipid A biosynthesis</keyword>
<keyword id="KW-0444">Lipid biosynthesis</keyword>
<keyword id="KW-0443">Lipid metabolism</keyword>
<keyword id="KW-0677">Repeat</keyword>
<keyword id="KW-0808">Transferase</keyword>
<comment type="function">
    <text evidence="1">Involved in the biosynthesis of lipid A, a phosphorylated glycolipid that anchors the lipopolysaccharide to the outer membrane of the cell.</text>
</comment>
<comment type="catalytic activity">
    <reaction evidence="1">
        <text>a (3R)-hydroxyacyl-[ACP] + UDP-N-acetyl-alpha-D-glucosamine = a UDP-3-O-[(3R)-3-hydroxyacyl]-N-acetyl-alpha-D-glucosamine + holo-[ACP]</text>
        <dbReference type="Rhea" id="RHEA:67812"/>
        <dbReference type="Rhea" id="RHEA-COMP:9685"/>
        <dbReference type="Rhea" id="RHEA-COMP:9945"/>
        <dbReference type="ChEBI" id="CHEBI:57705"/>
        <dbReference type="ChEBI" id="CHEBI:64479"/>
        <dbReference type="ChEBI" id="CHEBI:78827"/>
        <dbReference type="ChEBI" id="CHEBI:173225"/>
        <dbReference type="EC" id="2.3.1.129"/>
    </reaction>
</comment>
<comment type="pathway">
    <text evidence="1">Glycolipid biosynthesis; lipid IV(A) biosynthesis; lipid IV(A) from (3R)-3-hydroxytetradecanoyl-[acyl-carrier-protein] and UDP-N-acetyl-alpha-D-glucosamine: step 1/6.</text>
</comment>
<comment type="subunit">
    <text evidence="1">Homotrimer.</text>
</comment>
<comment type="subcellular location">
    <subcellularLocation>
        <location evidence="1">Cytoplasm</location>
    </subcellularLocation>
</comment>
<comment type="similarity">
    <text evidence="1">Belongs to the transferase hexapeptide repeat family. LpxA subfamily.</text>
</comment>
<proteinExistence type="inferred from homology"/>
<evidence type="ECO:0000255" key="1">
    <source>
        <dbReference type="HAMAP-Rule" id="MF_00387"/>
    </source>
</evidence>